<proteinExistence type="evidence at protein level"/>
<name>MAST2_MOUSE</name>
<evidence type="ECO:0000250" key="1"/>
<evidence type="ECO:0000250" key="2">
    <source>
        <dbReference type="UniProtKB" id="Q6P0Q8"/>
    </source>
</evidence>
<evidence type="ECO:0000250" key="3">
    <source>
        <dbReference type="UniProtKB" id="Q9BXM7"/>
    </source>
</evidence>
<evidence type="ECO:0000255" key="4">
    <source>
        <dbReference type="PROSITE-ProRule" id="PRU00143"/>
    </source>
</evidence>
<evidence type="ECO:0000255" key="5">
    <source>
        <dbReference type="PROSITE-ProRule" id="PRU00159"/>
    </source>
</evidence>
<evidence type="ECO:0000255" key="6">
    <source>
        <dbReference type="PROSITE-ProRule" id="PRU00618"/>
    </source>
</evidence>
<evidence type="ECO:0000255" key="7">
    <source>
        <dbReference type="PROSITE-ProRule" id="PRU10027"/>
    </source>
</evidence>
<evidence type="ECO:0000256" key="8">
    <source>
        <dbReference type="SAM" id="MobiDB-lite"/>
    </source>
</evidence>
<evidence type="ECO:0000269" key="9">
    <source>
    </source>
</evidence>
<evidence type="ECO:0000269" key="10">
    <source>
    </source>
</evidence>
<evidence type="ECO:0000269" key="11">
    <source>
    </source>
</evidence>
<evidence type="ECO:0000269" key="12">
    <source>
    </source>
</evidence>
<evidence type="ECO:0000269" key="13">
    <source>
    </source>
</evidence>
<evidence type="ECO:0000303" key="14">
    <source>
    </source>
</evidence>
<evidence type="ECO:0000305" key="15"/>
<evidence type="ECO:0000312" key="16">
    <source>
        <dbReference type="EMBL" id="AAC04312.1"/>
    </source>
</evidence>
<evidence type="ECO:0000312" key="17">
    <source>
        <dbReference type="EMBL" id="AAH60703.1"/>
    </source>
</evidence>
<evidence type="ECO:0000312" key="18">
    <source>
        <dbReference type="MGI" id="MGI:894676"/>
    </source>
</evidence>
<evidence type="ECO:0007744" key="19">
    <source>
    </source>
</evidence>
<evidence type="ECO:0007744" key="20">
    <source>
    </source>
</evidence>
<dbReference type="EC" id="2.7.11.1"/>
<dbReference type="EMBL" id="U02313">
    <property type="protein sequence ID" value="AAC04312.1"/>
    <property type="molecule type" value="mRNA"/>
</dbReference>
<dbReference type="EMBL" id="BC060703">
    <property type="protein sequence ID" value="AAH60703.1"/>
    <property type="molecule type" value="mRNA"/>
</dbReference>
<dbReference type="EMBL" id="AB093264">
    <property type="protein sequence ID" value="BAC41448.1"/>
    <property type="molecule type" value="mRNA"/>
</dbReference>
<dbReference type="PIR" id="A54602">
    <property type="entry name" value="A54602"/>
</dbReference>
<dbReference type="RefSeq" id="NP_001036208.1">
    <property type="nucleotide sequence ID" value="NM_001042743.2"/>
</dbReference>
<dbReference type="RefSeq" id="NP_032667.2">
    <property type="nucleotide sequence ID" value="NM_008641.3"/>
</dbReference>
<dbReference type="RefSeq" id="XP_017175507.1">
    <property type="nucleotide sequence ID" value="XM_017320018.1"/>
</dbReference>
<dbReference type="SMR" id="Q60592"/>
<dbReference type="BioGRID" id="201600">
    <property type="interactions" value="5"/>
</dbReference>
<dbReference type="FunCoup" id="Q60592">
    <property type="interactions" value="200"/>
</dbReference>
<dbReference type="IntAct" id="Q60592">
    <property type="interactions" value="7"/>
</dbReference>
<dbReference type="MINT" id="Q60592"/>
<dbReference type="STRING" id="10090.ENSMUSP00000102095"/>
<dbReference type="GlyGen" id="Q60592">
    <property type="glycosylation" value="2 sites"/>
</dbReference>
<dbReference type="iPTMnet" id="Q60592"/>
<dbReference type="PhosphoSitePlus" id="Q60592"/>
<dbReference type="jPOST" id="Q60592"/>
<dbReference type="PaxDb" id="10090-ENSMUSP00000102095"/>
<dbReference type="ProteomicsDB" id="295798"/>
<dbReference type="DNASU" id="17776"/>
<dbReference type="GeneID" id="17776"/>
<dbReference type="KEGG" id="mmu:17776"/>
<dbReference type="AGR" id="MGI:894676"/>
<dbReference type="CTD" id="23139"/>
<dbReference type="MGI" id="MGI:894676">
    <property type="gene designation" value="Mast2"/>
</dbReference>
<dbReference type="eggNOG" id="KOG0606">
    <property type="taxonomic scope" value="Eukaryota"/>
</dbReference>
<dbReference type="InParanoid" id="Q60592"/>
<dbReference type="OrthoDB" id="10070999at2759"/>
<dbReference type="BRENDA" id="2.7.11.1">
    <property type="organism ID" value="3474"/>
</dbReference>
<dbReference type="BioGRID-ORCS" id="17776">
    <property type="hits" value="3 hits in 83 CRISPR screens"/>
</dbReference>
<dbReference type="ChiTaRS" id="Mast2">
    <property type="organism name" value="mouse"/>
</dbReference>
<dbReference type="PRO" id="PR:Q60592"/>
<dbReference type="Proteomes" id="UP000000589">
    <property type="component" value="Unplaced"/>
</dbReference>
<dbReference type="RNAct" id="Q60592">
    <property type="molecule type" value="protein"/>
</dbReference>
<dbReference type="GO" id="GO:0070161">
    <property type="term" value="C:anchoring junction"/>
    <property type="evidence" value="ECO:0007669"/>
    <property type="project" value="UniProtKB-SubCell"/>
</dbReference>
<dbReference type="GO" id="GO:0005737">
    <property type="term" value="C:cytoplasm"/>
    <property type="evidence" value="ECO:0007669"/>
    <property type="project" value="UniProtKB-KW"/>
</dbReference>
<dbReference type="GO" id="GO:0016020">
    <property type="term" value="C:membrane"/>
    <property type="evidence" value="ECO:0007669"/>
    <property type="project" value="UniProtKB-SubCell"/>
</dbReference>
<dbReference type="GO" id="GO:0015630">
    <property type="term" value="C:microtubule cytoskeleton"/>
    <property type="evidence" value="ECO:0000314"/>
    <property type="project" value="MGI"/>
</dbReference>
<dbReference type="GO" id="GO:0005524">
    <property type="term" value="F:ATP binding"/>
    <property type="evidence" value="ECO:0000314"/>
    <property type="project" value="UniProtKB"/>
</dbReference>
<dbReference type="GO" id="GO:0000287">
    <property type="term" value="F:magnesium ion binding"/>
    <property type="evidence" value="ECO:0000314"/>
    <property type="project" value="UniProtKB"/>
</dbReference>
<dbReference type="GO" id="GO:0008017">
    <property type="term" value="F:microtubule binding"/>
    <property type="evidence" value="ECO:0000314"/>
    <property type="project" value="MGI"/>
</dbReference>
<dbReference type="GO" id="GO:0106310">
    <property type="term" value="F:protein serine kinase activity"/>
    <property type="evidence" value="ECO:0007669"/>
    <property type="project" value="RHEA"/>
</dbReference>
<dbReference type="GO" id="GO:0004674">
    <property type="term" value="F:protein serine/threonine kinase activity"/>
    <property type="evidence" value="ECO:0000314"/>
    <property type="project" value="MGI"/>
</dbReference>
<dbReference type="GO" id="GO:0006468">
    <property type="term" value="P:protein phosphorylation"/>
    <property type="evidence" value="ECO:0000314"/>
    <property type="project" value="UniProtKB"/>
</dbReference>
<dbReference type="GO" id="GO:0032655">
    <property type="term" value="P:regulation of interleukin-12 production"/>
    <property type="evidence" value="ECO:0000314"/>
    <property type="project" value="UniProtKB"/>
</dbReference>
<dbReference type="GO" id="GO:0048515">
    <property type="term" value="P:spermatid differentiation"/>
    <property type="evidence" value="ECO:0000314"/>
    <property type="project" value="UniProtKB"/>
</dbReference>
<dbReference type="CDD" id="cd23074">
    <property type="entry name" value="PDZ_MAST2"/>
    <property type="match status" value="1"/>
</dbReference>
<dbReference type="CDD" id="cd05609">
    <property type="entry name" value="STKc_MAST"/>
    <property type="match status" value="1"/>
</dbReference>
<dbReference type="FunFam" id="3.30.200.20:FF:001045">
    <property type="entry name" value="Microtubule-associated serine/threonine kinase 1a"/>
    <property type="match status" value="1"/>
</dbReference>
<dbReference type="FunFam" id="1.10.510.10:FF:000012">
    <property type="entry name" value="microtubule-associated serine/threonine-protein kinase 2 isoform X1"/>
    <property type="match status" value="1"/>
</dbReference>
<dbReference type="FunFam" id="1.20.1480.20:FF:000001">
    <property type="entry name" value="microtubule-associated serine/threonine-protein kinase 4 isoform X1"/>
    <property type="match status" value="1"/>
</dbReference>
<dbReference type="FunFam" id="2.30.42.10:FF:000008">
    <property type="entry name" value="microtubule-associated serine/threonine-protein kinase 4 isoform X2"/>
    <property type="match status" value="1"/>
</dbReference>
<dbReference type="Gene3D" id="2.30.42.10">
    <property type="match status" value="1"/>
</dbReference>
<dbReference type="Gene3D" id="1.20.1480.20">
    <property type="entry name" value="MAST3 pre-PK domain-like"/>
    <property type="match status" value="1"/>
</dbReference>
<dbReference type="Gene3D" id="3.30.200.20">
    <property type="entry name" value="Phosphorylase Kinase, domain 1"/>
    <property type="match status" value="1"/>
</dbReference>
<dbReference type="Gene3D" id="1.10.510.10">
    <property type="entry name" value="Transferase(Phosphotransferase) domain 1"/>
    <property type="match status" value="1"/>
</dbReference>
<dbReference type="InterPro" id="IPR000961">
    <property type="entry name" value="AGC-kinase_C"/>
</dbReference>
<dbReference type="InterPro" id="IPR011009">
    <property type="entry name" value="Kinase-like_dom_sf"/>
</dbReference>
<dbReference type="InterPro" id="IPR037711">
    <property type="entry name" value="MAST"/>
</dbReference>
<dbReference type="InterPro" id="IPR015022">
    <property type="entry name" value="MAST_pre-PK_dom"/>
</dbReference>
<dbReference type="InterPro" id="IPR023142">
    <property type="entry name" value="MAST_pre-PK_dom_sf"/>
</dbReference>
<dbReference type="InterPro" id="IPR001478">
    <property type="entry name" value="PDZ"/>
</dbReference>
<dbReference type="InterPro" id="IPR041489">
    <property type="entry name" value="PDZ_6"/>
</dbReference>
<dbReference type="InterPro" id="IPR036034">
    <property type="entry name" value="PDZ_sf"/>
</dbReference>
<dbReference type="InterPro" id="IPR000719">
    <property type="entry name" value="Prot_kinase_dom"/>
</dbReference>
<dbReference type="InterPro" id="IPR008271">
    <property type="entry name" value="Ser/Thr_kinase_AS"/>
</dbReference>
<dbReference type="InterPro" id="IPR050236">
    <property type="entry name" value="Ser_Thr_kinase_AGC"/>
</dbReference>
<dbReference type="PANTHER" id="PTHR24356:SF136">
    <property type="entry name" value="MICROTUBULE-ASSOCIATED SERINE_THREONINE-PROTEIN KINASE 2"/>
    <property type="match status" value="1"/>
</dbReference>
<dbReference type="PANTHER" id="PTHR24356">
    <property type="entry name" value="SERINE/THREONINE-PROTEIN KINASE"/>
    <property type="match status" value="1"/>
</dbReference>
<dbReference type="Pfam" id="PF08926">
    <property type="entry name" value="DUF1908"/>
    <property type="match status" value="1"/>
</dbReference>
<dbReference type="Pfam" id="PF17820">
    <property type="entry name" value="PDZ_6"/>
    <property type="match status" value="1"/>
</dbReference>
<dbReference type="Pfam" id="PF00069">
    <property type="entry name" value="Pkinase"/>
    <property type="match status" value="1"/>
</dbReference>
<dbReference type="SMART" id="SM00228">
    <property type="entry name" value="PDZ"/>
    <property type="match status" value="1"/>
</dbReference>
<dbReference type="SMART" id="SM00220">
    <property type="entry name" value="S_TKc"/>
    <property type="match status" value="1"/>
</dbReference>
<dbReference type="SUPFAM" id="SSF140482">
    <property type="entry name" value="MAST3 pre-PK domain-like"/>
    <property type="match status" value="1"/>
</dbReference>
<dbReference type="SUPFAM" id="SSF50156">
    <property type="entry name" value="PDZ domain-like"/>
    <property type="match status" value="1"/>
</dbReference>
<dbReference type="SUPFAM" id="SSF56112">
    <property type="entry name" value="Protein kinase-like (PK-like)"/>
    <property type="match status" value="1"/>
</dbReference>
<dbReference type="PROSITE" id="PS51285">
    <property type="entry name" value="AGC_KINASE_CTER"/>
    <property type="match status" value="1"/>
</dbReference>
<dbReference type="PROSITE" id="PS50106">
    <property type="entry name" value="PDZ"/>
    <property type="match status" value="1"/>
</dbReference>
<dbReference type="PROSITE" id="PS50011">
    <property type="entry name" value="PROTEIN_KINASE_DOM"/>
    <property type="match status" value="1"/>
</dbReference>
<dbReference type="PROSITE" id="PS00108">
    <property type="entry name" value="PROTEIN_KINASE_ST"/>
    <property type="match status" value="1"/>
</dbReference>
<accession>Q60592</accession>
<accession>Q6P9M1</accession>
<accession>Q8CHD1</accession>
<gene>
    <name evidence="18" type="primary">Mast2</name>
    <name evidence="14" type="synonym">Mast205</name>
</gene>
<organism>
    <name type="scientific">Mus musculus</name>
    <name type="common">Mouse</name>
    <dbReference type="NCBI Taxonomy" id="10090"/>
    <lineage>
        <taxon>Eukaryota</taxon>
        <taxon>Metazoa</taxon>
        <taxon>Chordata</taxon>
        <taxon>Craniata</taxon>
        <taxon>Vertebrata</taxon>
        <taxon>Euteleostomi</taxon>
        <taxon>Mammalia</taxon>
        <taxon>Eutheria</taxon>
        <taxon>Euarchontoglires</taxon>
        <taxon>Glires</taxon>
        <taxon>Rodentia</taxon>
        <taxon>Myomorpha</taxon>
        <taxon>Muroidea</taxon>
        <taxon>Muridae</taxon>
        <taxon>Murinae</taxon>
        <taxon>Mus</taxon>
        <taxon>Mus</taxon>
    </lineage>
</organism>
<sequence length="1734" mass="190534">MVTGLSPLLFRKLSNPDIFAPTGKVKLQRQLSQDDCKLRRGSLASSLSGKQLLPLSSSVHSSVGQVTWQSTGEASNLVRMRNQSLGQSAPSLTAGLKELSLPRRGSFCRTSNRKSLIVTSSTSPTLPRPHSPLHGHTGNSPLDSPRNFSPNAPAHFSFVPARRTDGRRWSLASLPSSGYGTNTPSSTVSSSCSSQEKLHQLPFQPTADELHFLTKHFSTENVPDEEGRRSPRMRPRSRSLSPGRSPVSFDSEIIMMNHVYKERFPKATAQMEERPSLTFISSNTPDSVLPLADGALSFIHHQVIEMARDCLDKSRSGLITSHYFYELQENLEKLLQDAHERSESSDVAFVIQLVKKLMIIIARPARLLECLEFDPEEFYHLLEAAEGHAKEGHGIKCDIPRYIVSQLGLTRDPLEEMAQLSSYDSPDTPETDDSVEGRGVSQPSQKTPSEEDFETIKLISNGAYGAVFLVRHKSTRQRFAMKKINKQNLILRNQIQQAFVERDILTFAENPFVVSMFCSFETKRHLCMVMEYVEGGDCATLLKNIGALPVDMVRLYFAETVLALEYLHNYGIVHRDLKPDNLLITSMGHIKLTDFGLSKIGLMSLTTNLYEGHIEKDAREFLDKQVCGTPEYIAPEVILRQGYGKPVDWWAMGIILYEFLVGCVPFFGDTPEELFGQVISDEIVWPEGDDALPPDAQDLTSKLLHQNPLERLGTSSAYEVKQHPFFMGLDWTGLLRQKAEFIPQLESEDDTSYFDTRSERYHHVDSEDEEEVSEDGCLEIRQFSSCSPRFSKVYSSMERLSLLEERRTPPPTKRSLSEEKEDHSDGLAGLKGRDRSWVIGSPEILRKRLSVSESSHTESDSSPPMTVRHRCSGLPDGPHCPEETSSTPRKQQQEGIWVLIPPSGEGSSRPVPERPLERQLKLDEEPPGQSSRCCPALETRGRGTPQLAEEATAKAISDLAVRRARHRLLSGDSIEKRTTRPVNKVIKSASATALSLLIPSEHHACSPLASPMSPHSQSSNPSSRDSSPSRDFLPALGSLRPPIIIHRAGKKYGFTLRAIRVYMGDTDVYTVHHMVWHVEDGGPASEAGLRQGDLITHVNGEPVHGLVHTEVVELVLKSGNKVSISTTPLENTSIKVGPARKGSYKAKMARRSKRSKGKDGQESRKRSSLFRKITKQASLLHTSRSLSSLNRSLSSGESGPGSPTHSHSLSPRSPPQGYRVAPDAVHSVGGNSSQSSSPSSSVPSSPAGSGHTRPSSLHGLAPKLQRQYRSPRRKSAGSIPLSPLAHTPSPPATAASPQRSPSPLSGHGSQSFPTKLHLSPPLGRQLSRPKSAEPPRSPLLKRVQSAEKLAAALAAAEKKLAPSRKHSLDLPHGELKKELTPREASPLEVVGTRSVLSGKGPLPGKGVLQPAPSRALGTLRQDRAERRESLQKQEAIREVDSSEDDTDEEPENSQATQEPRLSPHPEASHNLLPKGSGEGTEEDTFLHRDLKKQGPVLSGLVTGATLGSPRVDVPGLSPRKVSRPQAFEEATNPLQVPSLSRSGPTSPTPSEGCWKAQHLHTQALTALCPSFSELTPTGCSAATSTSGKPGTWSWKFLIEGPDRASTNKTITRKGEPANSQDTNTTVPNLLKNLSPEEEKPQPPSVPGLTHPLLEVPSQNWPWESECEQMEKEEPSLSITEVPDSSGDRRQDIPCRAHPLSPETRPSLLWKSQELGGQQDHQDLALTSDELLKQT</sequence>
<reference evidence="15 16" key="1">
    <citation type="journal article" date="1993" name="Mol. Cell. Biol.">
        <title>A novel 205-kDa testis-specific serine/threonine protein kinase associated with microtubules of the spermatid manchette.</title>
        <authorList>
            <person name="Walden P.D."/>
            <person name="Cowan N.J."/>
        </authorList>
    </citation>
    <scope>NUCLEOTIDE SEQUENCE [MRNA]</scope>
    <scope>FUNCTION</scope>
    <scope>TISSUE SPECIFICITY</scope>
    <source>
        <strain evidence="16">Swiss Webster</strain>
        <tissue evidence="16">Testis</tissue>
    </source>
</reference>
<reference evidence="17" key="2">
    <citation type="journal article" date="2004" name="Genome Res.">
        <title>The status, quality, and expansion of the NIH full-length cDNA project: the Mammalian Gene Collection (MGC).</title>
        <authorList>
            <consortium name="The MGC Project Team"/>
        </authorList>
    </citation>
    <scope>NUCLEOTIDE SEQUENCE [LARGE SCALE MRNA]</scope>
    <source>
        <strain evidence="17">C57BL/6J</strain>
        <tissue evidence="17">Brain</tissue>
    </source>
</reference>
<reference key="3">
    <citation type="journal article" date="2005" name="Science">
        <title>The transcriptional landscape of the mammalian genome.</title>
        <authorList>
            <person name="Carninci P."/>
            <person name="Kasukawa T."/>
            <person name="Katayama S."/>
            <person name="Gough J."/>
            <person name="Frith M.C."/>
            <person name="Maeda N."/>
            <person name="Oyama R."/>
            <person name="Ravasi T."/>
            <person name="Lenhard B."/>
            <person name="Wells C."/>
            <person name="Kodzius R."/>
            <person name="Shimokawa K."/>
            <person name="Bajic V.B."/>
            <person name="Brenner S.E."/>
            <person name="Batalov S."/>
            <person name="Forrest A.R."/>
            <person name="Zavolan M."/>
            <person name="Davis M.J."/>
            <person name="Wilming L.G."/>
            <person name="Aidinis V."/>
            <person name="Allen J.E."/>
            <person name="Ambesi-Impiombato A."/>
            <person name="Apweiler R."/>
            <person name="Aturaliya R.N."/>
            <person name="Bailey T.L."/>
            <person name="Bansal M."/>
            <person name="Baxter L."/>
            <person name="Beisel K.W."/>
            <person name="Bersano T."/>
            <person name="Bono H."/>
            <person name="Chalk A.M."/>
            <person name="Chiu K.P."/>
            <person name="Choudhary V."/>
            <person name="Christoffels A."/>
            <person name="Clutterbuck D.R."/>
            <person name="Crowe M.L."/>
            <person name="Dalla E."/>
            <person name="Dalrymple B.P."/>
            <person name="de Bono B."/>
            <person name="Della Gatta G."/>
            <person name="di Bernardo D."/>
            <person name="Down T."/>
            <person name="Engstrom P."/>
            <person name="Fagiolini M."/>
            <person name="Faulkner G."/>
            <person name="Fletcher C.F."/>
            <person name="Fukushima T."/>
            <person name="Furuno M."/>
            <person name="Futaki S."/>
            <person name="Gariboldi M."/>
            <person name="Georgii-Hemming P."/>
            <person name="Gingeras T.R."/>
            <person name="Gojobori T."/>
            <person name="Green R.E."/>
            <person name="Gustincich S."/>
            <person name="Harbers M."/>
            <person name="Hayashi Y."/>
            <person name="Hensch T.K."/>
            <person name="Hirokawa N."/>
            <person name="Hill D."/>
            <person name="Huminiecki L."/>
            <person name="Iacono M."/>
            <person name="Ikeo K."/>
            <person name="Iwama A."/>
            <person name="Ishikawa T."/>
            <person name="Jakt M."/>
            <person name="Kanapin A."/>
            <person name="Katoh M."/>
            <person name="Kawasawa Y."/>
            <person name="Kelso J."/>
            <person name="Kitamura H."/>
            <person name="Kitano H."/>
            <person name="Kollias G."/>
            <person name="Krishnan S.P."/>
            <person name="Kruger A."/>
            <person name="Kummerfeld S.K."/>
            <person name="Kurochkin I.V."/>
            <person name="Lareau L.F."/>
            <person name="Lazarevic D."/>
            <person name="Lipovich L."/>
            <person name="Liu J."/>
            <person name="Liuni S."/>
            <person name="McWilliam S."/>
            <person name="Madan Babu M."/>
            <person name="Madera M."/>
            <person name="Marchionni L."/>
            <person name="Matsuda H."/>
            <person name="Matsuzawa S."/>
            <person name="Miki H."/>
            <person name="Mignone F."/>
            <person name="Miyake S."/>
            <person name="Morris K."/>
            <person name="Mottagui-Tabar S."/>
            <person name="Mulder N."/>
            <person name="Nakano N."/>
            <person name="Nakauchi H."/>
            <person name="Ng P."/>
            <person name="Nilsson R."/>
            <person name="Nishiguchi S."/>
            <person name="Nishikawa S."/>
            <person name="Nori F."/>
            <person name="Ohara O."/>
            <person name="Okazaki Y."/>
            <person name="Orlando V."/>
            <person name="Pang K.C."/>
            <person name="Pavan W.J."/>
            <person name="Pavesi G."/>
            <person name="Pesole G."/>
            <person name="Petrovsky N."/>
            <person name="Piazza S."/>
            <person name="Reed J."/>
            <person name="Reid J.F."/>
            <person name="Ring B.Z."/>
            <person name="Ringwald M."/>
            <person name="Rost B."/>
            <person name="Ruan Y."/>
            <person name="Salzberg S.L."/>
            <person name="Sandelin A."/>
            <person name="Schneider C."/>
            <person name="Schoenbach C."/>
            <person name="Sekiguchi K."/>
            <person name="Semple C.A."/>
            <person name="Seno S."/>
            <person name="Sessa L."/>
            <person name="Sheng Y."/>
            <person name="Shibata Y."/>
            <person name="Shimada H."/>
            <person name="Shimada K."/>
            <person name="Silva D."/>
            <person name="Sinclair B."/>
            <person name="Sperling S."/>
            <person name="Stupka E."/>
            <person name="Sugiura K."/>
            <person name="Sultana R."/>
            <person name="Takenaka Y."/>
            <person name="Taki K."/>
            <person name="Tammoja K."/>
            <person name="Tan S.L."/>
            <person name="Tang S."/>
            <person name="Taylor M.S."/>
            <person name="Tegner J."/>
            <person name="Teichmann S.A."/>
            <person name="Ueda H.R."/>
            <person name="van Nimwegen E."/>
            <person name="Verardo R."/>
            <person name="Wei C.L."/>
            <person name="Yagi K."/>
            <person name="Yamanishi H."/>
            <person name="Zabarovsky E."/>
            <person name="Zhu S."/>
            <person name="Zimmer A."/>
            <person name="Hide W."/>
            <person name="Bult C."/>
            <person name="Grimmond S.M."/>
            <person name="Teasdale R.D."/>
            <person name="Liu E.T."/>
            <person name="Brusic V."/>
            <person name="Quackenbush J."/>
            <person name="Wahlestedt C."/>
            <person name="Mattick J.S."/>
            <person name="Hume D.A."/>
            <person name="Kai C."/>
            <person name="Sasaki D."/>
            <person name="Tomaru Y."/>
            <person name="Fukuda S."/>
            <person name="Kanamori-Katayama M."/>
            <person name="Suzuki M."/>
            <person name="Aoki J."/>
            <person name="Arakawa T."/>
            <person name="Iida J."/>
            <person name="Imamura K."/>
            <person name="Itoh M."/>
            <person name="Kato T."/>
            <person name="Kawaji H."/>
            <person name="Kawagashira N."/>
            <person name="Kawashima T."/>
            <person name="Kojima M."/>
            <person name="Kondo S."/>
            <person name="Konno H."/>
            <person name="Nakano K."/>
            <person name="Ninomiya N."/>
            <person name="Nishio T."/>
            <person name="Okada M."/>
            <person name="Plessy C."/>
            <person name="Shibata K."/>
            <person name="Shiraki T."/>
            <person name="Suzuki S."/>
            <person name="Tagami M."/>
            <person name="Waki K."/>
            <person name="Watahiki A."/>
            <person name="Okamura-Oho Y."/>
            <person name="Suzuki H."/>
            <person name="Kawai J."/>
            <person name="Hayashizaki Y."/>
        </authorList>
    </citation>
    <scope>NUCLEOTIDE SEQUENCE [LARGE SCALE MRNA] OF 302-1734</scope>
    <source>
        <tissue>Brain</tissue>
    </source>
</reference>
<reference evidence="15" key="4">
    <citation type="journal article" date="1996" name="Biol. Reprod.">
        <title>Increased activity associated with the MAST205 protein kinase complex during mammalian spermiogenesis.</title>
        <authorList>
            <person name="Walden P.D."/>
            <person name="Millette C.F."/>
        </authorList>
    </citation>
    <scope>FUNCTION</scope>
    <scope>TISSUE SPECIFICITY</scope>
</reference>
<reference evidence="15" key="5">
    <citation type="journal article" date="1999" name="Nat. Neurosci.">
        <title>Interactions between beta 2-syntrophin and a family of microtubule-associated serine/threonine kinases.</title>
        <authorList>
            <person name="Lumeng C."/>
            <person name="Phelps S."/>
            <person name="Crawford G.E."/>
            <person name="Walden P.D."/>
            <person name="Barald K."/>
            <person name="Chamberlain J.S."/>
        </authorList>
    </citation>
    <scope>FUNCTION</scope>
    <scope>SUBCELLULAR LOCATION</scope>
    <scope>TISSUE SPECIFICITY</scope>
    <scope>INTERACTION WITH SNTB2</scope>
</reference>
<reference evidence="15" key="6">
    <citation type="journal article" date="2004" name="J. Immunol.">
        <title>Microtubule-associated serine/threonine kinase-205 kDa and Fc gamma receptor control IL-12 p40 synthesis and NF-kappa B activation.</title>
        <authorList>
            <person name="Zhou H."/>
            <person name="Xiong H."/>
            <person name="Li H."/>
            <person name="Plevy S.E."/>
            <person name="Walden P.D."/>
            <person name="Sassaroli M."/>
            <person name="Prestwich G.D."/>
            <person name="Unkeless J.C."/>
        </authorList>
    </citation>
    <scope>FUNCTION</scope>
    <scope>UBIQUITINATION</scope>
    <scope>MUTAGENESIS OF 482-LYS-LYS-483</scope>
</reference>
<reference evidence="15" key="7">
    <citation type="journal article" date="2004" name="J. Biol. Chem.">
        <title>Interaction of TRAF6 with MAST205 regulates NF-kappaB activation and MAST205 stability.</title>
        <authorList>
            <person name="Xiong H."/>
            <person name="Li H."/>
            <person name="Chen Y."/>
            <person name="Zhao J."/>
            <person name="Unkeless J.C."/>
        </authorList>
    </citation>
    <scope>FUNCTION</scope>
    <scope>UBIQUITINATION</scope>
    <scope>PHOSPHORYLATION</scope>
    <scope>INTERACTION WITH TRAF6</scope>
</reference>
<reference key="8">
    <citation type="journal article" date="2007" name="Proc. Natl. Acad. Sci. U.S.A.">
        <title>Large-scale phosphorylation analysis of mouse liver.</title>
        <authorList>
            <person name="Villen J."/>
            <person name="Beausoleil S.A."/>
            <person name="Gerber S.A."/>
            <person name="Gygi S.P."/>
        </authorList>
    </citation>
    <scope>PHOSPHORYLATION [LARGE SCALE ANALYSIS] AT SER-1275</scope>
    <scope>IDENTIFICATION BY MASS SPECTROMETRY [LARGE SCALE ANALYSIS]</scope>
    <source>
        <tissue>Liver</tissue>
    </source>
</reference>
<reference key="9">
    <citation type="journal article" date="2010" name="Cell">
        <title>A tissue-specific atlas of mouse protein phosphorylation and expression.</title>
        <authorList>
            <person name="Huttlin E.L."/>
            <person name="Jedrychowski M.P."/>
            <person name="Elias J.E."/>
            <person name="Goswami T."/>
            <person name="Rad R."/>
            <person name="Beausoleil S.A."/>
            <person name="Villen J."/>
            <person name="Haas W."/>
            <person name="Sowa M.E."/>
            <person name="Gygi S.P."/>
        </authorList>
    </citation>
    <scope>PHOSPHORYLATION [LARGE SCALE ANALYSIS] AT SER-14; SER-88; SER-91; SER-149; SER-836; SER-841; SER-1275 AND SER-1711</scope>
    <scope>IDENTIFICATION BY MASS SPECTROMETRY [LARGE SCALE ANALYSIS]</scope>
    <source>
        <tissue>Brain</tissue>
        <tissue>Heart</tissue>
        <tissue>Kidney</tissue>
        <tissue>Liver</tissue>
        <tissue>Lung</tissue>
        <tissue>Pancreas</tissue>
        <tissue>Spleen</tissue>
        <tissue>Testis</tissue>
    </source>
</reference>
<protein>
    <recommendedName>
        <fullName>Microtubule-associated serine/threonine-protein kinase 2</fullName>
        <ecNumber>2.7.11.1</ecNumber>
    </recommendedName>
</protein>
<keyword id="KW-0067">ATP-binding</keyword>
<keyword id="KW-0965">Cell junction</keyword>
<keyword id="KW-0963">Cytoplasm</keyword>
<keyword id="KW-0206">Cytoskeleton</keyword>
<keyword id="KW-0418">Kinase</keyword>
<keyword id="KW-0460">Magnesium</keyword>
<keyword id="KW-0472">Membrane</keyword>
<keyword id="KW-0479">Metal-binding</keyword>
<keyword id="KW-0488">Methylation</keyword>
<keyword id="KW-0547">Nucleotide-binding</keyword>
<keyword id="KW-0597">Phosphoprotein</keyword>
<keyword id="KW-1185">Reference proteome</keyword>
<keyword id="KW-0723">Serine/threonine-protein kinase</keyword>
<keyword id="KW-0808">Transferase</keyword>
<keyword id="KW-0832">Ubl conjugation</keyword>
<comment type="function">
    <text evidence="9 10 11 12 13">Appears to link the dystrophin/utrophin network with microtubule filaments via the syntrophins. Phosphorylation of DMD or UTRN may modulate their affinities for associated proteins. Functions in a multi-protein complex in spermatid maturation. Regulates lipopolysaccharide-induced IL-12 synthesis in macrophages by forming a complex with TRAF6, resulting in the inhibition of TRAF6 NF-kappa-B activation.</text>
</comment>
<comment type="catalytic activity">
    <reaction evidence="12">
        <text>L-seryl-[protein] + ATP = O-phospho-L-seryl-[protein] + ADP + H(+)</text>
        <dbReference type="Rhea" id="RHEA:17989"/>
        <dbReference type="Rhea" id="RHEA-COMP:9863"/>
        <dbReference type="Rhea" id="RHEA-COMP:11604"/>
        <dbReference type="ChEBI" id="CHEBI:15378"/>
        <dbReference type="ChEBI" id="CHEBI:29999"/>
        <dbReference type="ChEBI" id="CHEBI:30616"/>
        <dbReference type="ChEBI" id="CHEBI:83421"/>
        <dbReference type="ChEBI" id="CHEBI:456216"/>
        <dbReference type="EC" id="2.7.11.1"/>
    </reaction>
</comment>
<comment type="catalytic activity">
    <reaction evidence="12">
        <text>L-threonyl-[protein] + ATP = O-phospho-L-threonyl-[protein] + ADP + H(+)</text>
        <dbReference type="Rhea" id="RHEA:46608"/>
        <dbReference type="Rhea" id="RHEA-COMP:11060"/>
        <dbReference type="Rhea" id="RHEA-COMP:11605"/>
        <dbReference type="ChEBI" id="CHEBI:15378"/>
        <dbReference type="ChEBI" id="CHEBI:30013"/>
        <dbReference type="ChEBI" id="CHEBI:30616"/>
        <dbReference type="ChEBI" id="CHEBI:61977"/>
        <dbReference type="ChEBI" id="CHEBI:456216"/>
        <dbReference type="EC" id="2.7.11.1"/>
    </reaction>
</comment>
<comment type="cofactor">
    <cofactor evidence="12">
        <name>Mg(2+)</name>
        <dbReference type="ChEBI" id="CHEBI:18420"/>
    </cofactor>
</comment>
<comment type="subunit">
    <text evidence="1">Interacts with CDHR2.</text>
</comment>
<comment type="interaction">
    <interactant intactId="EBI-493888">
        <id>Q60592</id>
    </interactant>
    <interactant intactId="EBI-696162">
        <id>P60484</id>
        <label>PTEN</label>
    </interactant>
    <organismsDiffer>true</organismsDiffer>
    <experiments>4</experiments>
</comment>
<comment type="interaction">
    <interactant intactId="EBI-493888">
        <id>Q60592</id>
    </interactant>
    <interactant intactId="EBI-413034">
        <id>P0CG47</id>
        <label>UBB</label>
    </interactant>
    <organismsDiffer>true</organismsDiffer>
    <experiments>2</experiments>
</comment>
<comment type="subcellular location">
    <subcellularLocation>
        <location evidence="9">Membrane</location>
        <topology evidence="9">Peripheral membrane protein</topology>
        <orientation evidence="9">Cytoplasmic side</orientation>
    </subcellularLocation>
    <subcellularLocation>
        <location evidence="9">Cytoplasm</location>
        <location evidence="9">Cytoskeleton</location>
    </subcellularLocation>
    <subcellularLocation>
        <location evidence="9">Cell junction</location>
    </subcellularLocation>
    <text>Colocalizes with beta 2-syntrophin and utrophin at neuromuscular junctions.</text>
</comment>
<comment type="tissue specificity">
    <text evidence="9 12 13">Detected in round spermatids and residual bodies but not epididymal spermatozoa (at protein level). Expressed in adult but not fetal testis with levels increasing in parallel with testicular development. Also expressed at high levels in heart, lower levels in all other tissues tested.</text>
</comment>
<comment type="PTM">
    <text evidence="10 11">Phosphorylated and ubiquitinated. N-terminal ubiquitination leads to degradation of MAST2 by proteasome-mediated proteolysis. N-terminal phosphorylation appears to be a prerequisite for ubiquitination.</text>
</comment>
<comment type="similarity">
    <text evidence="15">Belongs to the protein kinase superfamily. AGC Ser/Thr protein kinase family.</text>
</comment>
<feature type="chain" id="PRO_0000086313" description="Microtubule-associated serine/threonine-protein kinase 2">
    <location>
        <begin position="1"/>
        <end position="1734"/>
    </location>
</feature>
<feature type="domain" description="Protein kinase" evidence="5">
    <location>
        <begin position="453"/>
        <end position="726"/>
    </location>
</feature>
<feature type="domain" description="AGC-kinase C-terminal" evidence="6">
    <location>
        <begin position="727"/>
        <end position="795"/>
    </location>
</feature>
<feature type="domain" description="PDZ" evidence="4">
    <location>
        <begin position="1042"/>
        <end position="1130"/>
    </location>
</feature>
<feature type="region of interest" description="Disordered" evidence="8">
    <location>
        <begin position="112"/>
        <end position="197"/>
    </location>
</feature>
<feature type="region of interest" description="Disordered" evidence="8">
    <location>
        <begin position="216"/>
        <end position="246"/>
    </location>
</feature>
<feature type="region of interest" description="Disordered" evidence="8">
    <location>
        <begin position="421"/>
        <end position="451"/>
    </location>
</feature>
<feature type="region of interest" description="Disordered" evidence="8">
    <location>
        <begin position="802"/>
        <end position="834"/>
    </location>
</feature>
<feature type="region of interest" description="Disordered" evidence="8">
    <location>
        <begin position="849"/>
        <end position="895"/>
    </location>
</feature>
<feature type="region of interest" description="Disordered" evidence="8">
    <location>
        <begin position="919"/>
        <end position="947"/>
    </location>
</feature>
<feature type="region of interest" description="Disordered" evidence="8">
    <location>
        <begin position="1005"/>
        <end position="1032"/>
    </location>
</feature>
<feature type="region of interest" description="Disordered" evidence="8">
    <location>
        <begin position="1133"/>
        <end position="1484"/>
    </location>
</feature>
<feature type="region of interest" description="Disordered" evidence="8">
    <location>
        <begin position="1501"/>
        <end position="1553"/>
    </location>
</feature>
<feature type="region of interest" description="Disordered" evidence="8">
    <location>
        <begin position="1606"/>
        <end position="1734"/>
    </location>
</feature>
<feature type="compositionally biased region" description="Polar residues" evidence="8">
    <location>
        <begin position="112"/>
        <end position="125"/>
    </location>
</feature>
<feature type="compositionally biased region" description="Polar residues" evidence="8">
    <location>
        <begin position="137"/>
        <end position="150"/>
    </location>
</feature>
<feature type="compositionally biased region" description="Polar residues" evidence="8">
    <location>
        <begin position="173"/>
        <end position="184"/>
    </location>
</feature>
<feature type="compositionally biased region" description="Low complexity" evidence="8">
    <location>
        <begin position="185"/>
        <end position="194"/>
    </location>
</feature>
<feature type="compositionally biased region" description="Basic and acidic residues" evidence="8">
    <location>
        <begin position="815"/>
        <end position="834"/>
    </location>
</feature>
<feature type="compositionally biased region" description="Polar residues" evidence="8">
    <location>
        <begin position="883"/>
        <end position="894"/>
    </location>
</feature>
<feature type="compositionally biased region" description="Low complexity" evidence="8">
    <location>
        <begin position="1010"/>
        <end position="1026"/>
    </location>
</feature>
<feature type="compositionally biased region" description="Basic residues" evidence="8">
    <location>
        <begin position="1142"/>
        <end position="1156"/>
    </location>
</feature>
<feature type="compositionally biased region" description="Low complexity" evidence="8">
    <location>
        <begin position="1178"/>
        <end position="1211"/>
    </location>
</feature>
<feature type="compositionally biased region" description="Low complexity" evidence="8">
    <location>
        <begin position="1225"/>
        <end position="1250"/>
    </location>
</feature>
<feature type="compositionally biased region" description="Low complexity" evidence="8">
    <location>
        <begin position="1280"/>
        <end position="1303"/>
    </location>
</feature>
<feature type="compositionally biased region" description="Low complexity" evidence="8">
    <location>
        <begin position="1346"/>
        <end position="1355"/>
    </location>
</feature>
<feature type="compositionally biased region" description="Basic and acidic residues" evidence="8">
    <location>
        <begin position="1356"/>
        <end position="1381"/>
    </location>
</feature>
<feature type="compositionally biased region" description="Basic and acidic residues" evidence="8">
    <location>
        <begin position="1420"/>
        <end position="1440"/>
    </location>
</feature>
<feature type="compositionally biased region" description="Acidic residues" evidence="8">
    <location>
        <begin position="1441"/>
        <end position="1451"/>
    </location>
</feature>
<feature type="compositionally biased region" description="Polar residues" evidence="8">
    <location>
        <begin position="1532"/>
        <end position="1549"/>
    </location>
</feature>
<feature type="compositionally biased region" description="Polar residues" evidence="8">
    <location>
        <begin position="1617"/>
        <end position="1627"/>
    </location>
</feature>
<feature type="compositionally biased region" description="Basic and acidic residues" evidence="8">
    <location>
        <begin position="1685"/>
        <end position="1694"/>
    </location>
</feature>
<feature type="active site" description="Proton acceptor" evidence="3 5 7">
    <location>
        <position position="576"/>
    </location>
</feature>
<feature type="binding site" evidence="3 5">
    <location>
        <begin position="459"/>
        <end position="467"/>
    </location>
    <ligand>
        <name>ATP</name>
        <dbReference type="ChEBI" id="CHEBI:30616"/>
    </ligand>
</feature>
<feature type="binding site" evidence="3 5">
    <location>
        <position position="482"/>
    </location>
    <ligand>
        <name>ATP</name>
        <dbReference type="ChEBI" id="CHEBI:30616"/>
    </ligand>
</feature>
<feature type="modified residue" description="Phosphoserine" evidence="2">
    <location>
        <position position="6"/>
    </location>
</feature>
<feature type="modified residue" description="Phosphoserine" evidence="20">
    <location>
        <position position="14"/>
    </location>
</feature>
<feature type="modified residue" description="Phosphoserine" evidence="20">
    <location>
        <position position="88"/>
    </location>
</feature>
<feature type="modified residue" description="Phosphoserine" evidence="20">
    <location>
        <position position="91"/>
    </location>
</feature>
<feature type="modified residue" description="Phosphoserine" evidence="20">
    <location>
        <position position="149"/>
    </location>
</feature>
<feature type="modified residue" description="Phosphoserine" evidence="2">
    <location>
        <position position="230"/>
    </location>
</feature>
<feature type="modified residue" description="Phosphoserine" evidence="2">
    <location>
        <position position="815"/>
    </location>
</feature>
<feature type="modified residue" description="Phosphoserine" evidence="2">
    <location>
        <position position="817"/>
    </location>
</feature>
<feature type="modified residue" description="Phosphoserine" evidence="20">
    <location>
        <position position="836"/>
    </location>
</feature>
<feature type="modified residue" description="Phosphoserine" evidence="20">
    <location>
        <position position="841"/>
    </location>
</feature>
<feature type="modified residue" description="Omega-N-methylarginine" evidence="2">
    <location>
        <position position="942"/>
    </location>
</feature>
<feature type="modified residue" description="Phosphoserine" evidence="2">
    <location>
        <position position="970"/>
    </location>
</feature>
<feature type="modified residue" description="Phosphoserine" evidence="2">
    <location>
        <position position="1194"/>
    </location>
</feature>
<feature type="modified residue" description="Phosphoserine" evidence="19 20">
    <location>
        <position position="1275"/>
    </location>
</feature>
<feature type="modified residue" description="Phosphoserine" evidence="2">
    <location>
        <position position="1302"/>
    </location>
</feature>
<feature type="modified residue" description="Phosphoserine" evidence="2">
    <location>
        <position position="1385"/>
    </location>
</feature>
<feature type="modified residue" description="Phosphothreonine" evidence="2">
    <location>
        <position position="1446"/>
    </location>
</feature>
<feature type="modified residue" description="Phosphoserine" evidence="20">
    <location>
        <position position="1711"/>
    </location>
</feature>
<feature type="mutagenesis site" description="Abolishes LPS-stimulated IL12B synthesis." evidence="10">
    <original>KK</original>
    <variation>RA</variation>
    <location>
        <begin position="482"/>
        <end position="483"/>
    </location>
</feature>
<feature type="sequence conflict" description="In Ref. 2; AAH60703." evidence="15" ref="2">
    <original>R</original>
    <variation>RSHGHRTD</variation>
    <location>
        <position position="162"/>
    </location>
</feature>
<feature type="sequence conflict" description="In Ref. 2; AAH60703." evidence="15" ref="2">
    <original>R</original>
    <variation>A</variation>
    <location>
        <position position="232"/>
    </location>
</feature>
<feature type="sequence conflict" description="In Ref. 2; AAH60703." evidence="15" ref="2">
    <original>PSLT</original>
    <variation>LAD</variation>
    <location>
        <begin position="275"/>
        <end position="278"/>
    </location>
</feature>
<feature type="sequence conflict" description="In Ref. 3." evidence="15" ref="3">
    <original>R</original>
    <variation>C</variation>
    <location>
        <position position="478"/>
    </location>
</feature>
<feature type="sequence conflict" description="In Ref. 2 and 3." evidence="15" ref="2 3">
    <location>
        <position position="1228"/>
    </location>
</feature>
<feature type="sequence conflict" description="In Ref. 3." evidence="15" ref="3">
    <original>T</original>
    <variation>S</variation>
    <location>
        <position position="1502"/>
    </location>
</feature>
<feature type="sequence conflict" description="In Ref. 2 and 3." evidence="15" ref="2 3">
    <original>V</original>
    <variation>L</variation>
    <location>
        <position position="1521"/>
    </location>
</feature>